<proteinExistence type="evidence at transcript level"/>
<organism>
    <name type="scientific">Ascaris suum</name>
    <name type="common">Pig roundworm</name>
    <name type="synonym">Ascaris lumbricoides</name>
    <dbReference type="NCBI Taxonomy" id="6253"/>
    <lineage>
        <taxon>Eukaryota</taxon>
        <taxon>Metazoa</taxon>
        <taxon>Ecdysozoa</taxon>
        <taxon>Nematoda</taxon>
        <taxon>Chromadorea</taxon>
        <taxon>Rhabditida</taxon>
        <taxon>Spirurina</taxon>
        <taxon>Ascaridomorpha</taxon>
        <taxon>Ascaridoidea</taxon>
        <taxon>Ascarididae</taxon>
        <taxon>Ascaris</taxon>
    </lineage>
</organism>
<reference key="1">
    <citation type="journal article" date="1994" name="Dev. Biol.">
        <title>Extremely stable transcripts may compensate for the elimination of the gene fert-1 from all Ascaris lumbricoides somatic cells.</title>
        <authorList>
            <person name="Spicher A."/>
            <person name="Etter A."/>
            <person name="Bernard V."/>
            <person name="Tobler H."/>
            <person name="Mueller F."/>
        </authorList>
    </citation>
    <scope>NUCLEOTIDE SEQUENCE [GENOMIC DNA]</scope>
</reference>
<name>FER1_ASCSU</name>
<dbReference type="EMBL" id="U07350">
    <property type="protein sequence ID" value="AAA20581.1"/>
    <property type="molecule type" value="Genomic_DNA"/>
</dbReference>
<gene>
    <name type="primary">FERT-1</name>
</gene>
<protein>
    <recommendedName>
        <fullName>Putative FERT-1 protein</fullName>
    </recommendedName>
</protein>
<comment type="developmental stage">
    <text>FERT-1 transcripts are produced in the precursors of the gametes, but degraded at the time of meiosis and not passed on to the zygote.</text>
</comment>
<feature type="chain" id="PRO_0000087226" description="Putative FERT-1 protein">
    <location>
        <begin position="1"/>
        <end position="137"/>
    </location>
</feature>
<sequence>MMVKQEIVQTGRAQELRCQGYDALKRTSYEFTKHAQPLPNGGFLLCNLEACSYSIQGCGFSPTFALESSEGSVDWRETLILSPKPKLFFLLCREGGPAVHLLSVSSYGDRCKSGEARLRTWHLSCSRCGVALLPSGA</sequence>
<accession>P49671</accession>